<protein>
    <recommendedName>
        <fullName evidence="1">Translation initiation factor 2 subunit beta</fullName>
    </recommendedName>
    <alternativeName>
        <fullName evidence="1">aIF2-beta</fullName>
    </alternativeName>
    <alternativeName>
        <fullName evidence="1">eIF-2-beta</fullName>
    </alternativeName>
</protein>
<gene>
    <name evidence="1" type="primary">eif2b</name>
    <name type="ordered locus">Saci_0961</name>
</gene>
<organism>
    <name type="scientific">Sulfolobus acidocaldarius (strain ATCC 33909 / DSM 639 / JCM 8929 / NBRC 15157 / NCIMB 11770)</name>
    <dbReference type="NCBI Taxonomy" id="330779"/>
    <lineage>
        <taxon>Archaea</taxon>
        <taxon>Thermoproteota</taxon>
        <taxon>Thermoprotei</taxon>
        <taxon>Sulfolobales</taxon>
        <taxon>Sulfolobaceae</taxon>
        <taxon>Sulfolobus</taxon>
    </lineage>
</organism>
<feature type="chain" id="PRO_0000137433" description="Translation initiation factor 2 subunit beta">
    <location>
        <begin position="1"/>
        <end position="141"/>
    </location>
</feature>
<dbReference type="EMBL" id="CP000077">
    <property type="protein sequence ID" value="AAY80323.1"/>
    <property type="molecule type" value="Genomic_DNA"/>
</dbReference>
<dbReference type="RefSeq" id="WP_011277825.1">
    <property type="nucleotide sequence ID" value="NC_007181.1"/>
</dbReference>
<dbReference type="SMR" id="Q4JA57"/>
<dbReference type="STRING" id="330779.Saci_0961"/>
<dbReference type="GeneID" id="14551472"/>
<dbReference type="KEGG" id="sai:Saci_0961"/>
<dbReference type="PATRIC" id="fig|330779.12.peg.922"/>
<dbReference type="eggNOG" id="arCOG01640">
    <property type="taxonomic scope" value="Archaea"/>
</dbReference>
<dbReference type="HOGENOM" id="CLU_026663_3_1_2"/>
<dbReference type="Proteomes" id="UP000001018">
    <property type="component" value="Chromosome"/>
</dbReference>
<dbReference type="GO" id="GO:0003743">
    <property type="term" value="F:translation initiation factor activity"/>
    <property type="evidence" value="ECO:0007669"/>
    <property type="project" value="UniProtKB-UniRule"/>
</dbReference>
<dbReference type="FunFam" id="3.30.30.170:FF:000001">
    <property type="entry name" value="Eukaryotic translation initiation factor 2 subunit"/>
    <property type="match status" value="1"/>
</dbReference>
<dbReference type="Gene3D" id="3.30.30.170">
    <property type="match status" value="1"/>
</dbReference>
<dbReference type="HAMAP" id="MF_00232">
    <property type="entry name" value="eIF_2_beta"/>
    <property type="match status" value="1"/>
</dbReference>
<dbReference type="InterPro" id="IPR045196">
    <property type="entry name" value="IF2/IF5"/>
</dbReference>
<dbReference type="InterPro" id="IPR004458">
    <property type="entry name" value="TIF2_bsu_arc"/>
</dbReference>
<dbReference type="InterPro" id="IPR002735">
    <property type="entry name" value="Transl_init_fac_IF2/IF5_dom"/>
</dbReference>
<dbReference type="InterPro" id="IPR016189">
    <property type="entry name" value="Transl_init_fac_IF2/IF5_N"/>
</dbReference>
<dbReference type="InterPro" id="IPR016190">
    <property type="entry name" value="Transl_init_fac_IF2/IF5_Zn-bd"/>
</dbReference>
<dbReference type="NCBIfam" id="NF003067">
    <property type="entry name" value="PRK03988.1"/>
    <property type="match status" value="1"/>
</dbReference>
<dbReference type="PANTHER" id="PTHR23001">
    <property type="entry name" value="EUKARYOTIC TRANSLATION INITIATION FACTOR"/>
    <property type="match status" value="1"/>
</dbReference>
<dbReference type="PANTHER" id="PTHR23001:SF3">
    <property type="entry name" value="EUKARYOTIC TRANSLATION INITIATION FACTOR 2 SUBUNIT 2"/>
    <property type="match status" value="1"/>
</dbReference>
<dbReference type="Pfam" id="PF01873">
    <property type="entry name" value="eIF-5_eIF-2B"/>
    <property type="match status" value="1"/>
</dbReference>
<dbReference type="SMART" id="SM00653">
    <property type="entry name" value="eIF2B_5"/>
    <property type="match status" value="1"/>
</dbReference>
<dbReference type="SUPFAM" id="SSF100966">
    <property type="entry name" value="Translation initiation factor 2 beta, aIF2beta, N-terminal domain"/>
    <property type="match status" value="1"/>
</dbReference>
<dbReference type="SUPFAM" id="SSF75689">
    <property type="entry name" value="Zinc-binding domain of translation initiation factor 2 beta"/>
    <property type="match status" value="1"/>
</dbReference>
<accession>Q4JA57</accession>
<sequence length="141" mass="16288">MTVKVDKNYEQLLDRLYDRLPDKAQKSGQQNLPNLIVLQVGNTTIIRNFSEYCDRIRREDKLCMRYLLKELAAPGSLGENGQLVIQGKFSSQVVTMLMERFLKMYVQCSTCRSFDTILKRDKKVWIISCLACGAQTPVKQF</sequence>
<reference key="1">
    <citation type="journal article" date="2005" name="J. Bacteriol.">
        <title>The genome of Sulfolobus acidocaldarius, a model organism of the Crenarchaeota.</title>
        <authorList>
            <person name="Chen L."/>
            <person name="Bruegger K."/>
            <person name="Skovgaard M."/>
            <person name="Redder P."/>
            <person name="She Q."/>
            <person name="Torarinsson E."/>
            <person name="Greve B."/>
            <person name="Awayez M."/>
            <person name="Zibat A."/>
            <person name="Klenk H.-P."/>
            <person name="Garrett R.A."/>
        </authorList>
    </citation>
    <scope>NUCLEOTIDE SEQUENCE [LARGE SCALE GENOMIC DNA]</scope>
    <source>
        <strain>ATCC 33909 / DSM 639 / JCM 8929 / NBRC 15157 / NCIMB 11770</strain>
    </source>
</reference>
<keyword id="KW-0396">Initiation factor</keyword>
<keyword id="KW-0648">Protein biosynthesis</keyword>
<keyword id="KW-1185">Reference proteome</keyword>
<name>IF2B_SULAC</name>
<evidence type="ECO:0000255" key="1">
    <source>
        <dbReference type="HAMAP-Rule" id="MF_00232"/>
    </source>
</evidence>
<comment type="function">
    <text evidence="1">eIF-2 functions in the early steps of protein synthesis by forming a ternary complex with GTP and initiator tRNA.</text>
</comment>
<comment type="subunit">
    <text evidence="1">Heterotrimer composed of an alpha, a beta and a gamma chain.</text>
</comment>
<comment type="similarity">
    <text evidence="1">Belongs to the eIF-2-beta/eIF-5 family.</text>
</comment>
<proteinExistence type="inferred from homology"/>